<proteinExistence type="inferred from homology"/>
<protein>
    <recommendedName>
        <fullName evidence="1">UPF0145 protein OE_4416R</fullName>
    </recommendedName>
</protein>
<accession>B0R7V3</accession>
<reference key="1">
    <citation type="journal article" date="2008" name="Genomics">
        <title>Evolution in the laboratory: the genome of Halobacterium salinarum strain R1 compared to that of strain NRC-1.</title>
        <authorList>
            <person name="Pfeiffer F."/>
            <person name="Schuster S.C."/>
            <person name="Broicher A."/>
            <person name="Falb M."/>
            <person name="Palm P."/>
            <person name="Rodewald K."/>
            <person name="Ruepp A."/>
            <person name="Soppa J."/>
            <person name="Tittor J."/>
            <person name="Oesterhelt D."/>
        </authorList>
    </citation>
    <scope>NUCLEOTIDE SEQUENCE [LARGE SCALE GENOMIC DNA]</scope>
    <source>
        <strain>ATCC 29341 / DSM 671 / R1</strain>
    </source>
</reference>
<sequence>MEFVTTETVPGREITESLGVARGNTVKARNVGRDITQSIRNITGGELKAYSELLTDARDDALDRMAEDARSMGADAVVNVRLESSEIANGGSEVIAYGTAVTLA</sequence>
<feature type="chain" id="PRO_1000120000" description="UPF0145 protein OE_4416R">
    <location>
        <begin position="1"/>
        <end position="104"/>
    </location>
</feature>
<organism>
    <name type="scientific">Halobacterium salinarum (strain ATCC 29341 / DSM 671 / R1)</name>
    <dbReference type="NCBI Taxonomy" id="478009"/>
    <lineage>
        <taxon>Archaea</taxon>
        <taxon>Methanobacteriati</taxon>
        <taxon>Methanobacteriota</taxon>
        <taxon>Stenosarchaea group</taxon>
        <taxon>Halobacteria</taxon>
        <taxon>Halobacteriales</taxon>
        <taxon>Halobacteriaceae</taxon>
        <taxon>Halobacterium</taxon>
        <taxon>Halobacterium salinarum NRC-34001</taxon>
    </lineage>
</organism>
<evidence type="ECO:0000255" key="1">
    <source>
        <dbReference type="HAMAP-Rule" id="MF_00338"/>
    </source>
</evidence>
<comment type="similarity">
    <text evidence="1">Belongs to the UPF0145 family.</text>
</comment>
<dbReference type="EMBL" id="AM774415">
    <property type="protein sequence ID" value="CAP14822.1"/>
    <property type="molecule type" value="Genomic_DNA"/>
</dbReference>
<dbReference type="RefSeq" id="WP_010903818.1">
    <property type="nucleotide sequence ID" value="NC_010364.1"/>
</dbReference>
<dbReference type="SMR" id="B0R7V3"/>
<dbReference type="EnsemblBacteria" id="CAP14822">
    <property type="protein sequence ID" value="CAP14822"/>
    <property type="gene ID" value="OE_4416R"/>
</dbReference>
<dbReference type="KEGG" id="hsl:OE_4416R"/>
<dbReference type="HOGENOM" id="CLU_117144_1_2_2"/>
<dbReference type="PhylomeDB" id="B0R7V3"/>
<dbReference type="Proteomes" id="UP000001321">
    <property type="component" value="Chromosome"/>
</dbReference>
<dbReference type="Gene3D" id="3.30.110.70">
    <property type="entry name" value="Hypothetical protein apc22750. Chain B"/>
    <property type="match status" value="1"/>
</dbReference>
<dbReference type="HAMAP" id="MF_00338">
    <property type="entry name" value="UPF0145"/>
    <property type="match status" value="1"/>
</dbReference>
<dbReference type="InterPro" id="IPR035439">
    <property type="entry name" value="UPF0145_dom_sf"/>
</dbReference>
<dbReference type="InterPro" id="IPR002765">
    <property type="entry name" value="UPF0145_YbjQ-like"/>
</dbReference>
<dbReference type="PANTHER" id="PTHR34068:SF2">
    <property type="entry name" value="UPF0145 PROTEIN SCO3412"/>
    <property type="match status" value="1"/>
</dbReference>
<dbReference type="PANTHER" id="PTHR34068">
    <property type="entry name" value="UPF0145 PROTEIN YBJQ"/>
    <property type="match status" value="1"/>
</dbReference>
<dbReference type="Pfam" id="PF01906">
    <property type="entry name" value="YbjQ_1"/>
    <property type="match status" value="1"/>
</dbReference>
<dbReference type="SUPFAM" id="SSF117782">
    <property type="entry name" value="YbjQ-like"/>
    <property type="match status" value="1"/>
</dbReference>
<name>Y4416_HALS3</name>
<gene>
    <name type="ordered locus">OE_4416R</name>
</gene>